<evidence type="ECO:0000255" key="1"/>
<evidence type="ECO:0000269" key="2">
    <source>
    </source>
</evidence>
<evidence type="ECO:0000269" key="3">
    <source ref="2"/>
</evidence>
<evidence type="ECO:0000303" key="4">
    <source>
    </source>
</evidence>
<evidence type="ECO:0000305" key="5"/>
<evidence type="ECO:0000305" key="6">
    <source>
    </source>
</evidence>
<evidence type="ECO:0000305" key="7">
    <source ref="2"/>
</evidence>
<feature type="signal peptide" evidence="1">
    <location>
        <begin position="1"/>
        <end position="19"/>
    </location>
</feature>
<feature type="chain" id="PRO_5004602849" description="Beta-xylosidase">
    <location>
        <begin position="20"/>
        <end position="723"/>
    </location>
</feature>
<dbReference type="EC" id="3.2.1.-" evidence="2 3"/>
<dbReference type="EMBL" id="HG315671">
    <property type="protein sequence ID" value="CDF79925.1"/>
    <property type="molecule type" value="Genomic_DNA"/>
</dbReference>
<dbReference type="RefSeq" id="WP_038530516.1">
    <property type="nucleotide sequence ID" value="NZ_HG315671.1"/>
</dbReference>
<dbReference type="SMR" id="T2KMH0"/>
<dbReference type="STRING" id="1347342.BN863_22130"/>
<dbReference type="PATRIC" id="fig|1347342.6.peg.2220"/>
<dbReference type="eggNOG" id="COG1472">
    <property type="taxonomic scope" value="Bacteria"/>
</dbReference>
<dbReference type="HOGENOM" id="CLU_004542_5_1_10"/>
<dbReference type="OrthoDB" id="9805821at2"/>
<dbReference type="Proteomes" id="UP000016160">
    <property type="component" value="Chromosome"/>
</dbReference>
<dbReference type="GO" id="GO:0042597">
    <property type="term" value="C:periplasmic space"/>
    <property type="evidence" value="ECO:0007669"/>
    <property type="project" value="UniProtKB-SubCell"/>
</dbReference>
<dbReference type="GO" id="GO:0046556">
    <property type="term" value="F:alpha-L-arabinofuranosidase activity"/>
    <property type="evidence" value="ECO:0007669"/>
    <property type="project" value="TreeGrafter"/>
</dbReference>
<dbReference type="GO" id="GO:0009044">
    <property type="term" value="F:xylan 1,4-beta-xylosidase activity"/>
    <property type="evidence" value="ECO:0007669"/>
    <property type="project" value="InterPro"/>
</dbReference>
<dbReference type="GO" id="GO:0031222">
    <property type="term" value="P:arabinan catabolic process"/>
    <property type="evidence" value="ECO:0007669"/>
    <property type="project" value="TreeGrafter"/>
</dbReference>
<dbReference type="GO" id="GO:0045493">
    <property type="term" value="P:xylan catabolic process"/>
    <property type="evidence" value="ECO:0007669"/>
    <property type="project" value="InterPro"/>
</dbReference>
<dbReference type="FunFam" id="2.60.40.10:FF:000495">
    <property type="entry name" value="Periplasmic beta-glucosidase"/>
    <property type="match status" value="1"/>
</dbReference>
<dbReference type="FunFam" id="3.40.50.1700:FF:000009">
    <property type="entry name" value="Periplasmic beta-glucosidase"/>
    <property type="match status" value="1"/>
</dbReference>
<dbReference type="Gene3D" id="3.40.50.1700">
    <property type="entry name" value="Glycoside hydrolase family 3 C-terminal domain"/>
    <property type="match status" value="1"/>
</dbReference>
<dbReference type="Gene3D" id="3.20.20.300">
    <property type="entry name" value="Glycoside hydrolase, family 3, N-terminal domain"/>
    <property type="match status" value="1"/>
</dbReference>
<dbReference type="Gene3D" id="2.60.40.10">
    <property type="entry name" value="Immunoglobulins"/>
    <property type="match status" value="1"/>
</dbReference>
<dbReference type="InterPro" id="IPR044993">
    <property type="entry name" value="BXL"/>
</dbReference>
<dbReference type="InterPro" id="IPR026891">
    <property type="entry name" value="Fn3-like"/>
</dbReference>
<dbReference type="InterPro" id="IPR053667">
    <property type="entry name" value="GH3_Beta-Xylosidase"/>
</dbReference>
<dbReference type="InterPro" id="IPR002772">
    <property type="entry name" value="Glyco_hydro_3_C"/>
</dbReference>
<dbReference type="InterPro" id="IPR036881">
    <property type="entry name" value="Glyco_hydro_3_C_sf"/>
</dbReference>
<dbReference type="InterPro" id="IPR001764">
    <property type="entry name" value="Glyco_hydro_3_N"/>
</dbReference>
<dbReference type="InterPro" id="IPR036962">
    <property type="entry name" value="Glyco_hydro_3_N_sf"/>
</dbReference>
<dbReference type="InterPro" id="IPR017853">
    <property type="entry name" value="Glycoside_hydrolase_SF"/>
</dbReference>
<dbReference type="InterPro" id="IPR013783">
    <property type="entry name" value="Ig-like_fold"/>
</dbReference>
<dbReference type="NCBIfam" id="NF041579">
    <property type="entry name" value="betaxyl_Flavo"/>
    <property type="match status" value="1"/>
</dbReference>
<dbReference type="PANTHER" id="PTHR42721:SF3">
    <property type="entry name" value="BETA-D-XYLOSIDASE 5-RELATED"/>
    <property type="match status" value="1"/>
</dbReference>
<dbReference type="PANTHER" id="PTHR42721">
    <property type="entry name" value="SUGAR HYDROLASE-RELATED"/>
    <property type="match status" value="1"/>
</dbReference>
<dbReference type="Pfam" id="PF14310">
    <property type="entry name" value="Fn3-like"/>
    <property type="match status" value="1"/>
</dbReference>
<dbReference type="Pfam" id="PF00933">
    <property type="entry name" value="Glyco_hydro_3"/>
    <property type="match status" value="1"/>
</dbReference>
<dbReference type="Pfam" id="PF01915">
    <property type="entry name" value="Glyco_hydro_3_C"/>
    <property type="match status" value="1"/>
</dbReference>
<dbReference type="PRINTS" id="PR00133">
    <property type="entry name" value="GLHYDRLASE3"/>
</dbReference>
<dbReference type="SMART" id="SM01217">
    <property type="entry name" value="Fn3_like"/>
    <property type="match status" value="1"/>
</dbReference>
<dbReference type="SUPFAM" id="SSF51445">
    <property type="entry name" value="(Trans)glycosidases"/>
    <property type="match status" value="1"/>
</dbReference>
<dbReference type="SUPFAM" id="SSF52279">
    <property type="entry name" value="Beta-D-glucan exohydrolase, C-terminal domain"/>
    <property type="match status" value="1"/>
</dbReference>
<dbReference type="PROSITE" id="PS00775">
    <property type="entry name" value="GLYCOSYL_HYDROL_F3"/>
    <property type="match status" value="1"/>
</dbReference>
<reference key="1">
    <citation type="journal article" date="2013" name="Appl. Environ. Microbiol.">
        <title>The genome of the alga-associated marine flavobacterium Formosa agariphila KMM 3901T reveals a broad potential for degradation of algal polysaccharides.</title>
        <authorList>
            <person name="Mann A.J."/>
            <person name="Hahnke R.L."/>
            <person name="Huang S."/>
            <person name="Werner J."/>
            <person name="Xing P."/>
            <person name="Barbeyron T."/>
            <person name="Huettel B."/>
            <person name="Stueber K."/>
            <person name="Reinhardt R."/>
            <person name="Harder J."/>
            <person name="Gloeckner F.O."/>
            <person name="Amann R.I."/>
            <person name="Teeling H."/>
        </authorList>
    </citation>
    <scope>NUCLEOTIDE SEQUENCE [LARGE SCALE GENOMIC DNA]</scope>
    <source>
        <strain>DSM 15362 / KCTC 12365 / LMG 23005 / KMM 3901 / M-2Alg 35-1</strain>
    </source>
</reference>
<reference key="2">
    <citation type="journal article" date="2017" name="Algal Res.">
        <title>The enzymatic ulvan depolymerisation system from the alga-associated marine flavobacterium Formosa agariphila.</title>
        <authorList>
            <person name="Salinas A."/>
            <person name="French C.E."/>
        </authorList>
    </citation>
    <scope>FUNCTION</scope>
    <scope>CATALYTIC ACTIVITY</scope>
</reference>
<reference key="3">
    <citation type="journal article" date="2019" name="Nat. Chem. Biol.">
        <title>A marine bacterial enzymatic cascade degrades the algal polysaccharide ulvan.</title>
        <authorList>
            <person name="Reisky L."/>
            <person name="Prechoux A."/>
            <person name="Zuehlke M.K."/>
            <person name="Baeumgen M."/>
            <person name="Robb C.S."/>
            <person name="Gerlach N."/>
            <person name="Roret T."/>
            <person name="Stanetty C."/>
            <person name="Larocque R."/>
            <person name="Michel G."/>
            <person name="Song T."/>
            <person name="Markert S."/>
            <person name="Unfried F."/>
            <person name="Mihovilovic M.D."/>
            <person name="Trautwein-Schult A."/>
            <person name="Becher D."/>
            <person name="Schweder T."/>
            <person name="Bornscheuer U.T."/>
            <person name="Hehemann J.H."/>
        </authorList>
    </citation>
    <scope>FUNCTION</scope>
    <scope>CATALYTIC ACTIVITY</scope>
    <scope>SUBCELLULAR LOCATION</scope>
    <scope>INDUCTION</scope>
</reference>
<name>PLH24_FORAG</name>
<organism>
    <name type="scientific">Formosa agariphila (strain DSM 15362 / KCTC 12365 / LMG 23005 / KMM 3901 / M-2Alg 35-1)</name>
    <dbReference type="NCBI Taxonomy" id="1347342"/>
    <lineage>
        <taxon>Bacteria</taxon>
        <taxon>Pseudomonadati</taxon>
        <taxon>Bacteroidota</taxon>
        <taxon>Flavobacteriia</taxon>
        <taxon>Flavobacteriales</taxon>
        <taxon>Flavobacteriaceae</taxon>
        <taxon>Formosa</taxon>
    </lineage>
</organism>
<keyword id="KW-0326">Glycosidase</keyword>
<keyword id="KW-0378">Hydrolase</keyword>
<keyword id="KW-0574">Periplasm</keyword>
<keyword id="KW-1185">Reference proteome</keyword>
<keyword id="KW-0732">Signal</keyword>
<protein>
    <recommendedName>
        <fullName evidence="4">Beta-xylosidase</fullName>
        <ecNumber evidence="2 3">3.2.1.-</ecNumber>
    </recommendedName>
    <alternativeName>
        <fullName evidence="5">Glycosyl hydrolase 3 family protein P24</fullName>
        <shortName evidence="4">P24_GH3</shortName>
    </alternativeName>
    <alternativeName>
        <fullName evidence="4">Polysaccharide utilization locus H protein P24</fullName>
        <shortName>PUL H protein P24</shortName>
    </alternativeName>
</protein>
<comment type="function">
    <text evidence="2 3 7">Xylosidase involved in ulvan degradation (PubMed:31285597, Ref.2). Ulvan is the main polysaccharide component of the Ulvales (green seaweed) cell wall. It is composed of disaccharide building blocks comprising 3-sulfated rhamnose (Rha3S) linked to D-glucuronic acid (GlcA), L-iduronic acid (IduA), or D-xylose (Xyl) (Probable). Beta-xylosidase converts Xyl-Rha3S, a product of alpha-L-rhamnosidase acting on Rha-Xyl-Rha3S oligosaccharides, further to Xyl and Rha3S (PubMed:31285597). The enzyme is able to degrade 4-methylumbelliferyl-beta-D-xylopyranoside (MUX) in vitro (Ref.2).</text>
</comment>
<comment type="subcellular location">
    <subcellularLocation>
        <location evidence="6">Periplasm</location>
    </subcellularLocation>
</comment>
<comment type="induction">
    <text evidence="2">By ulvan and rhamnose.</text>
</comment>
<comment type="similarity">
    <text evidence="5">Belongs to the glycosyl hydrolase 3 family.</text>
</comment>
<gene>
    <name type="ORF">BN863_22130</name>
</gene>
<proteinExistence type="evidence at protein level"/>
<accession>T2KMH0</accession>
<sequence>MKKLWLMGLLLASFFTTVAQNNAQTKSNSDEEIDKKVATLISQMTLDEKIAEMTQDAPANERLGIPSMKYGEALHGLWLVLDYYGNTTVYPQAVAAASTWEPELIKKMASQTAREARALGVTHCYSPNLDVYAGDARYGRVEESYGEDPYLVSRMGVAFIEGLQGTGEEQFDENHVIATAKHFVGYPENRRGINGGFSDMSERRLREVYLPPFEAAVKEAGVGSVMPGHQDFNGVPCHMNTWLLKDILRDELGFDGFIVSDNNDVGRLETMHFIAENRTEAAILGLKAGVDMDLVIGKNVELATYHTNILKDTILKNPALMKYIDQATSRILTAKYKLGLFDAKPKKIDTETVETGTDEHREFALELAEKSIIMLKNDNNLLPLDVSKIKSLAVIGPNAHEERPKKGTYKLLGGYSGLPPYYVSVLDGLKKKVGEHVKINYAKGCDIDSFSKEGFPEAISAAKNSDAVVLVVGSSHKTCGEGGDRADLDLYGVQKELVEAIHKTGKPVIVVLINGRPLSINYIAENIPSILETWYGGMRAGDAVANVIFGDVNPGGKLTMSFPRDVGQVPVTYLERPDFIGSGKGQYRFSDKTPLFPFGFGLSYTTFKYGTPKLDNTSIAANGTTTVSVEVTNTGKVTGDEVVQMYVRDDYASVGRYLKMLKGFKRITLKPGETKTVSFKLGFDELNILNQDLKKVVEPGTFTISVGASSKADDLKTVSLTVK</sequence>